<feature type="chain" id="PRO_0000156638" description="Homoserine kinase">
    <location>
        <begin position="1"/>
        <end position="313"/>
    </location>
</feature>
<feature type="binding site" evidence="1">
    <location>
        <begin position="92"/>
        <end position="102"/>
    </location>
    <ligand>
        <name>ATP</name>
        <dbReference type="ChEBI" id="CHEBI:30616"/>
    </ligand>
</feature>
<reference key="1">
    <citation type="journal article" date="1999" name="DNA Res.">
        <title>Complete genome sequence of an aerobic hyper-thermophilic crenarchaeon, Aeropyrum pernix K1.</title>
        <authorList>
            <person name="Kawarabayasi Y."/>
            <person name="Hino Y."/>
            <person name="Horikawa H."/>
            <person name="Yamazaki S."/>
            <person name="Haikawa Y."/>
            <person name="Jin-no K."/>
            <person name="Takahashi M."/>
            <person name="Sekine M."/>
            <person name="Baba S."/>
            <person name="Ankai A."/>
            <person name="Kosugi H."/>
            <person name="Hosoyama A."/>
            <person name="Fukui S."/>
            <person name="Nagai Y."/>
            <person name="Nishijima K."/>
            <person name="Nakazawa H."/>
            <person name="Takamiya M."/>
            <person name="Masuda S."/>
            <person name="Funahashi T."/>
            <person name="Tanaka T."/>
            <person name="Kudoh Y."/>
            <person name="Yamazaki J."/>
            <person name="Kushida N."/>
            <person name="Oguchi A."/>
            <person name="Aoki K."/>
            <person name="Kubota K."/>
            <person name="Nakamura Y."/>
            <person name="Nomura N."/>
            <person name="Sako Y."/>
            <person name="Kikuchi H."/>
        </authorList>
    </citation>
    <scope>NUCLEOTIDE SEQUENCE [LARGE SCALE GENOMIC DNA]</scope>
    <source>
        <strain>ATCC 700893 / DSM 11879 / JCM 9820 / NBRC 100138 / K1</strain>
    </source>
</reference>
<protein>
    <recommendedName>
        <fullName evidence="1">Homoserine kinase</fullName>
        <shortName evidence="1">HK</shortName>
        <shortName evidence="1">HSK</shortName>
        <ecNumber evidence="1">2.7.1.39</ecNumber>
    </recommendedName>
</protein>
<name>KHSE_AERPE</name>
<organism>
    <name type="scientific">Aeropyrum pernix (strain ATCC 700893 / DSM 11879 / JCM 9820 / NBRC 100138 / K1)</name>
    <dbReference type="NCBI Taxonomy" id="272557"/>
    <lineage>
        <taxon>Archaea</taxon>
        <taxon>Thermoproteota</taxon>
        <taxon>Thermoprotei</taxon>
        <taxon>Desulfurococcales</taxon>
        <taxon>Desulfurococcaceae</taxon>
        <taxon>Aeropyrum</taxon>
    </lineage>
</organism>
<comment type="function">
    <text evidence="1">Catalyzes the ATP-dependent phosphorylation of L-homoserine to L-homoserine phosphate.</text>
</comment>
<comment type="catalytic activity">
    <reaction evidence="1">
        <text>L-homoserine + ATP = O-phospho-L-homoserine + ADP + H(+)</text>
        <dbReference type="Rhea" id="RHEA:13985"/>
        <dbReference type="ChEBI" id="CHEBI:15378"/>
        <dbReference type="ChEBI" id="CHEBI:30616"/>
        <dbReference type="ChEBI" id="CHEBI:57476"/>
        <dbReference type="ChEBI" id="CHEBI:57590"/>
        <dbReference type="ChEBI" id="CHEBI:456216"/>
        <dbReference type="EC" id="2.7.1.39"/>
    </reaction>
</comment>
<comment type="pathway">
    <text evidence="1">Amino-acid biosynthesis; L-threonine biosynthesis; L-threonine from L-aspartate: step 4/5.</text>
</comment>
<comment type="subcellular location">
    <subcellularLocation>
        <location evidence="1">Cytoplasm</location>
    </subcellularLocation>
</comment>
<comment type="similarity">
    <text evidence="1">Belongs to the GHMP kinase family. Homoserine kinase subfamily.</text>
</comment>
<evidence type="ECO:0000255" key="1">
    <source>
        <dbReference type="HAMAP-Rule" id="MF_00384"/>
    </source>
</evidence>
<sequence>MACSRARARAYSSAANLGPGFDALAVALDAYYDEVEVRVCSGGNSVYVDEVEGKFSSGVLQGPNTAAEAVRGLLNMEGVEAEVGIRVYKGVPPGRGLGSSGASAAAAVAAVSHALALEVPVDRLVFYAGLGERAAAGQPHFDNAAASILGGLAVVASDAAGKLRVFRVPFKAWFAVVTPMNPVPQGKTGVMRKVLPENVSFRDAVRNFSRAAGIVAAAVNGDLKSMGALMMSDEIVEPRRRSYVPCYTQVRKAALQAGALGFSLSGAGPSMIALAPSSEAAREIAAAMEESCICCDNPMTVAAEPAPGASVVG</sequence>
<gene>
    <name evidence="1" type="primary">thrB</name>
    <name type="ordered locus">APE_2067.1</name>
</gene>
<proteinExistence type="inferred from homology"/>
<accession>Q9YA72</accession>
<dbReference type="EC" id="2.7.1.39" evidence="1"/>
<dbReference type="EMBL" id="BA000002">
    <property type="protein sequence ID" value="BAA81077.2"/>
    <property type="molecule type" value="Genomic_DNA"/>
</dbReference>
<dbReference type="PIR" id="E72511">
    <property type="entry name" value="E72511"/>
</dbReference>
<dbReference type="RefSeq" id="WP_010866770.1">
    <property type="nucleotide sequence ID" value="NC_000854.2"/>
</dbReference>
<dbReference type="SMR" id="Q9YA72"/>
<dbReference type="STRING" id="272557.APE_2067.1"/>
<dbReference type="EnsemblBacteria" id="BAA81077">
    <property type="protein sequence ID" value="BAA81077"/>
    <property type="gene ID" value="APE_2067.1"/>
</dbReference>
<dbReference type="GeneID" id="1445166"/>
<dbReference type="KEGG" id="ape:APE_2067.1"/>
<dbReference type="PATRIC" id="fig|272557.25.peg.1373"/>
<dbReference type="eggNOG" id="arCOG01027">
    <property type="taxonomic scope" value="Archaea"/>
</dbReference>
<dbReference type="UniPathway" id="UPA00050">
    <property type="reaction ID" value="UER00064"/>
</dbReference>
<dbReference type="Proteomes" id="UP000002518">
    <property type="component" value="Chromosome"/>
</dbReference>
<dbReference type="GO" id="GO:0005737">
    <property type="term" value="C:cytoplasm"/>
    <property type="evidence" value="ECO:0007669"/>
    <property type="project" value="UniProtKB-SubCell"/>
</dbReference>
<dbReference type="GO" id="GO:0005524">
    <property type="term" value="F:ATP binding"/>
    <property type="evidence" value="ECO:0007669"/>
    <property type="project" value="UniProtKB-UniRule"/>
</dbReference>
<dbReference type="GO" id="GO:0004413">
    <property type="term" value="F:homoserine kinase activity"/>
    <property type="evidence" value="ECO:0007669"/>
    <property type="project" value="UniProtKB-UniRule"/>
</dbReference>
<dbReference type="GO" id="GO:0009088">
    <property type="term" value="P:threonine biosynthetic process"/>
    <property type="evidence" value="ECO:0007669"/>
    <property type="project" value="UniProtKB-UniRule"/>
</dbReference>
<dbReference type="Gene3D" id="3.30.230.10">
    <property type="match status" value="1"/>
</dbReference>
<dbReference type="Gene3D" id="3.30.70.890">
    <property type="entry name" value="GHMP kinase, C-terminal domain"/>
    <property type="match status" value="1"/>
</dbReference>
<dbReference type="HAMAP" id="MF_00384">
    <property type="entry name" value="Homoser_kinase"/>
    <property type="match status" value="1"/>
</dbReference>
<dbReference type="InterPro" id="IPR013750">
    <property type="entry name" value="GHMP_kinase_C_dom"/>
</dbReference>
<dbReference type="InterPro" id="IPR036554">
    <property type="entry name" value="GHMP_kinase_C_sf"/>
</dbReference>
<dbReference type="InterPro" id="IPR006204">
    <property type="entry name" value="GHMP_kinase_N_dom"/>
</dbReference>
<dbReference type="InterPro" id="IPR006203">
    <property type="entry name" value="GHMP_knse_ATP-bd_CS"/>
</dbReference>
<dbReference type="InterPro" id="IPR000870">
    <property type="entry name" value="Homoserine_kinase"/>
</dbReference>
<dbReference type="InterPro" id="IPR020568">
    <property type="entry name" value="Ribosomal_Su5_D2-typ_SF"/>
</dbReference>
<dbReference type="InterPro" id="IPR014721">
    <property type="entry name" value="Ribsml_uS5_D2-typ_fold_subgr"/>
</dbReference>
<dbReference type="NCBIfam" id="NF002288">
    <property type="entry name" value="PRK01212.1-4"/>
    <property type="match status" value="1"/>
</dbReference>
<dbReference type="NCBIfam" id="TIGR00191">
    <property type="entry name" value="thrB"/>
    <property type="match status" value="1"/>
</dbReference>
<dbReference type="PANTHER" id="PTHR20861:SF1">
    <property type="entry name" value="HOMOSERINE KINASE"/>
    <property type="match status" value="1"/>
</dbReference>
<dbReference type="PANTHER" id="PTHR20861">
    <property type="entry name" value="HOMOSERINE/4-DIPHOSPHOCYTIDYL-2-C-METHYL-D-ERYTHRITOL KINASE"/>
    <property type="match status" value="1"/>
</dbReference>
<dbReference type="Pfam" id="PF08544">
    <property type="entry name" value="GHMP_kinases_C"/>
    <property type="match status" value="1"/>
</dbReference>
<dbReference type="Pfam" id="PF00288">
    <property type="entry name" value="GHMP_kinases_N"/>
    <property type="match status" value="1"/>
</dbReference>
<dbReference type="PIRSF" id="PIRSF000676">
    <property type="entry name" value="Homoser_kin"/>
    <property type="match status" value="1"/>
</dbReference>
<dbReference type="PRINTS" id="PR00958">
    <property type="entry name" value="HOMSERKINASE"/>
</dbReference>
<dbReference type="SUPFAM" id="SSF55060">
    <property type="entry name" value="GHMP Kinase, C-terminal domain"/>
    <property type="match status" value="1"/>
</dbReference>
<dbReference type="SUPFAM" id="SSF54211">
    <property type="entry name" value="Ribosomal protein S5 domain 2-like"/>
    <property type="match status" value="1"/>
</dbReference>
<dbReference type="PROSITE" id="PS00627">
    <property type="entry name" value="GHMP_KINASES_ATP"/>
    <property type="match status" value="1"/>
</dbReference>
<keyword id="KW-0028">Amino-acid biosynthesis</keyword>
<keyword id="KW-0067">ATP-binding</keyword>
<keyword id="KW-0963">Cytoplasm</keyword>
<keyword id="KW-0418">Kinase</keyword>
<keyword id="KW-0547">Nucleotide-binding</keyword>
<keyword id="KW-1185">Reference proteome</keyword>
<keyword id="KW-0791">Threonine biosynthesis</keyword>
<keyword id="KW-0808">Transferase</keyword>